<accession>Q19V96</accession>
<sequence length="33" mass="3472">MNLEVIAQLTVLSLIVLSGPLVIILLAANRGNL</sequence>
<comment type="function">
    <text evidence="1">A core subunit of photosystem II (PSII), probably helps stabilize the reaction center.</text>
</comment>
<comment type="subunit">
    <text evidence="1">PSII is composed of 1 copy each of membrane proteins PsbA, PsbB, PsbC, PsbD, PsbE, PsbF, PsbH, PsbI, PsbJ, PsbK, PsbL, PsbM, PsbT, PsbX, PsbY, PsbZ, Psb30/Ycf12, peripheral proteins of the oxygen-evolving complex and a large number of cofactors. It forms dimeric complexes.</text>
</comment>
<comment type="subcellular location">
    <subcellularLocation>
        <location evidence="1">Plastid</location>
        <location evidence="1">Chloroplast thylakoid membrane</location>
        <topology evidence="1">Single-pass membrane protein</topology>
    </subcellularLocation>
</comment>
<comment type="similarity">
    <text evidence="1">Belongs to the Psb30/Ycf12 family.</text>
</comment>
<feature type="chain" id="PRO_0000342351" description="Photosystem II reaction center protein Psb30">
    <location>
        <begin position="1"/>
        <end position="33"/>
    </location>
</feature>
<feature type="transmembrane region" description="Helical" evidence="1">
    <location>
        <begin position="5"/>
        <end position="25"/>
    </location>
</feature>
<organism>
    <name type="scientific">Chlorokybus atmophyticus</name>
    <name type="common">Soil alga</name>
    <dbReference type="NCBI Taxonomy" id="3144"/>
    <lineage>
        <taxon>Eukaryota</taxon>
        <taxon>Viridiplantae</taxon>
        <taxon>Streptophyta</taxon>
        <taxon>Chlorokybophyceae</taxon>
        <taxon>Chlorokybales</taxon>
        <taxon>Chlorokybaceae</taxon>
        <taxon>Chlorokybus</taxon>
    </lineage>
</organism>
<gene>
    <name evidence="1" type="primary">psb30</name>
    <name evidence="1" type="synonym">ycf12</name>
</gene>
<reference key="1">
    <citation type="journal article" date="2007" name="BMC Biol.">
        <title>A clade uniting the green algae Mesostigma viride and Chlorokybus atmophyticus represents the deepest branch of the Streptophyta in chloroplast genome-based phylogenies.</title>
        <authorList>
            <person name="Lemieux C."/>
            <person name="Otis C."/>
            <person name="Turmel M."/>
        </authorList>
    </citation>
    <scope>NUCLEOTIDE SEQUENCE [LARGE SCALE GENOMIC DNA]</scope>
    <source>
        <strain>SAG 48.80</strain>
    </source>
</reference>
<keyword id="KW-0150">Chloroplast</keyword>
<keyword id="KW-0472">Membrane</keyword>
<keyword id="KW-0602">Photosynthesis</keyword>
<keyword id="KW-0604">Photosystem II</keyword>
<keyword id="KW-0934">Plastid</keyword>
<keyword id="KW-0793">Thylakoid</keyword>
<keyword id="KW-0812">Transmembrane</keyword>
<keyword id="KW-1133">Transmembrane helix</keyword>
<dbReference type="EMBL" id="DQ422812">
    <property type="protein sequence ID" value="ABD62258.2"/>
    <property type="molecule type" value="Genomic_DNA"/>
</dbReference>
<dbReference type="RefSeq" id="YP_001019106.1">
    <property type="nucleotide sequence ID" value="NC_008822.1"/>
</dbReference>
<dbReference type="SMR" id="Q19V96"/>
<dbReference type="GeneID" id="4783198"/>
<dbReference type="GO" id="GO:0009535">
    <property type="term" value="C:chloroplast thylakoid membrane"/>
    <property type="evidence" value="ECO:0007669"/>
    <property type="project" value="UniProtKB-SubCell"/>
</dbReference>
<dbReference type="GO" id="GO:0009523">
    <property type="term" value="C:photosystem II"/>
    <property type="evidence" value="ECO:0007669"/>
    <property type="project" value="UniProtKB-KW"/>
</dbReference>
<dbReference type="GO" id="GO:0015979">
    <property type="term" value="P:photosynthesis"/>
    <property type="evidence" value="ECO:0007669"/>
    <property type="project" value="UniProtKB-KW"/>
</dbReference>
<dbReference type="HAMAP" id="MF_01329">
    <property type="entry name" value="PSII_Psb30_Ycf12"/>
    <property type="match status" value="1"/>
</dbReference>
<dbReference type="InterPro" id="IPR010284">
    <property type="entry name" value="PSII_Ycf12_core-subunit"/>
</dbReference>
<dbReference type="NCBIfam" id="NF010239">
    <property type="entry name" value="PRK13686.1"/>
    <property type="match status" value="1"/>
</dbReference>
<dbReference type="Pfam" id="PF05969">
    <property type="entry name" value="PSII_Ycf12"/>
    <property type="match status" value="1"/>
</dbReference>
<protein>
    <recommendedName>
        <fullName evidence="1">Photosystem II reaction center protein Psb30</fullName>
    </recommendedName>
    <alternativeName>
        <fullName evidence="1">Photosystem II reaction center protein Ycf12</fullName>
    </alternativeName>
</protein>
<geneLocation type="chloroplast"/>
<proteinExistence type="inferred from homology"/>
<evidence type="ECO:0000255" key="1">
    <source>
        <dbReference type="HAMAP-Rule" id="MF_01329"/>
    </source>
</evidence>
<name>PSB30_CHLAT</name>